<accession>Q60BS8</accession>
<comment type="function">
    <text evidence="1">Can catalyze the hydrolysis of ATP in the presence of single-stranded DNA, the ATP-dependent uptake of single-stranded DNA by duplex DNA, and the ATP-dependent hybridization of homologous single-stranded DNAs. It interacts with LexA causing its activation and leading to its autocatalytic cleavage.</text>
</comment>
<comment type="subcellular location">
    <subcellularLocation>
        <location evidence="1">Cytoplasm</location>
    </subcellularLocation>
</comment>
<comment type="similarity">
    <text evidence="1">Belongs to the RecA family.</text>
</comment>
<dbReference type="EMBL" id="AE017282">
    <property type="protein sequence ID" value="AAU90485.1"/>
    <property type="molecule type" value="Genomic_DNA"/>
</dbReference>
<dbReference type="RefSeq" id="WP_010959747.1">
    <property type="nucleotide sequence ID" value="NC_002977.6"/>
</dbReference>
<dbReference type="SMR" id="Q60BS8"/>
<dbReference type="STRING" id="243233.MCA0387"/>
<dbReference type="GeneID" id="88222728"/>
<dbReference type="KEGG" id="mca:MCA0387"/>
<dbReference type="eggNOG" id="COG0468">
    <property type="taxonomic scope" value="Bacteria"/>
</dbReference>
<dbReference type="HOGENOM" id="CLU_040469_3_2_6"/>
<dbReference type="Proteomes" id="UP000006821">
    <property type="component" value="Chromosome"/>
</dbReference>
<dbReference type="GO" id="GO:0005829">
    <property type="term" value="C:cytosol"/>
    <property type="evidence" value="ECO:0007669"/>
    <property type="project" value="TreeGrafter"/>
</dbReference>
<dbReference type="GO" id="GO:0005524">
    <property type="term" value="F:ATP binding"/>
    <property type="evidence" value="ECO:0007669"/>
    <property type="project" value="UniProtKB-UniRule"/>
</dbReference>
<dbReference type="GO" id="GO:0016887">
    <property type="term" value="F:ATP hydrolysis activity"/>
    <property type="evidence" value="ECO:0007669"/>
    <property type="project" value="InterPro"/>
</dbReference>
<dbReference type="GO" id="GO:0140664">
    <property type="term" value="F:ATP-dependent DNA damage sensor activity"/>
    <property type="evidence" value="ECO:0007669"/>
    <property type="project" value="InterPro"/>
</dbReference>
<dbReference type="GO" id="GO:0003684">
    <property type="term" value="F:damaged DNA binding"/>
    <property type="evidence" value="ECO:0007669"/>
    <property type="project" value="UniProtKB-UniRule"/>
</dbReference>
<dbReference type="GO" id="GO:0003697">
    <property type="term" value="F:single-stranded DNA binding"/>
    <property type="evidence" value="ECO:0007669"/>
    <property type="project" value="UniProtKB-UniRule"/>
</dbReference>
<dbReference type="GO" id="GO:0006310">
    <property type="term" value="P:DNA recombination"/>
    <property type="evidence" value="ECO:0007669"/>
    <property type="project" value="UniProtKB-UniRule"/>
</dbReference>
<dbReference type="GO" id="GO:0006281">
    <property type="term" value="P:DNA repair"/>
    <property type="evidence" value="ECO:0007669"/>
    <property type="project" value="UniProtKB-UniRule"/>
</dbReference>
<dbReference type="GO" id="GO:0009432">
    <property type="term" value="P:SOS response"/>
    <property type="evidence" value="ECO:0007669"/>
    <property type="project" value="UniProtKB-UniRule"/>
</dbReference>
<dbReference type="CDD" id="cd00983">
    <property type="entry name" value="RecA"/>
    <property type="match status" value="1"/>
</dbReference>
<dbReference type="FunFam" id="3.40.50.300:FF:000087">
    <property type="entry name" value="Recombinase RecA"/>
    <property type="match status" value="1"/>
</dbReference>
<dbReference type="Gene3D" id="3.40.50.300">
    <property type="entry name" value="P-loop containing nucleotide triphosphate hydrolases"/>
    <property type="match status" value="1"/>
</dbReference>
<dbReference type="HAMAP" id="MF_00268">
    <property type="entry name" value="RecA"/>
    <property type="match status" value="1"/>
</dbReference>
<dbReference type="InterPro" id="IPR003593">
    <property type="entry name" value="AAA+_ATPase"/>
</dbReference>
<dbReference type="InterPro" id="IPR013765">
    <property type="entry name" value="DNA_recomb/repair_RecA"/>
</dbReference>
<dbReference type="InterPro" id="IPR020584">
    <property type="entry name" value="DNA_recomb/repair_RecA_CS"/>
</dbReference>
<dbReference type="InterPro" id="IPR027417">
    <property type="entry name" value="P-loop_NTPase"/>
</dbReference>
<dbReference type="InterPro" id="IPR049261">
    <property type="entry name" value="RecA-like_C"/>
</dbReference>
<dbReference type="InterPro" id="IPR049428">
    <property type="entry name" value="RecA-like_N"/>
</dbReference>
<dbReference type="InterPro" id="IPR020588">
    <property type="entry name" value="RecA_ATP-bd"/>
</dbReference>
<dbReference type="InterPro" id="IPR023400">
    <property type="entry name" value="RecA_C_sf"/>
</dbReference>
<dbReference type="InterPro" id="IPR020587">
    <property type="entry name" value="RecA_monomer-monomer_interface"/>
</dbReference>
<dbReference type="NCBIfam" id="TIGR02012">
    <property type="entry name" value="tigrfam_recA"/>
    <property type="match status" value="1"/>
</dbReference>
<dbReference type="PANTHER" id="PTHR45900:SF1">
    <property type="entry name" value="MITOCHONDRIAL DNA REPAIR PROTEIN RECA HOMOLOG-RELATED"/>
    <property type="match status" value="1"/>
</dbReference>
<dbReference type="PANTHER" id="PTHR45900">
    <property type="entry name" value="RECA"/>
    <property type="match status" value="1"/>
</dbReference>
<dbReference type="Pfam" id="PF00154">
    <property type="entry name" value="RecA"/>
    <property type="match status" value="1"/>
</dbReference>
<dbReference type="Pfam" id="PF21096">
    <property type="entry name" value="RecA_C"/>
    <property type="match status" value="1"/>
</dbReference>
<dbReference type="PRINTS" id="PR00142">
    <property type="entry name" value="RECA"/>
</dbReference>
<dbReference type="SMART" id="SM00382">
    <property type="entry name" value="AAA"/>
    <property type="match status" value="1"/>
</dbReference>
<dbReference type="SUPFAM" id="SSF52540">
    <property type="entry name" value="P-loop containing nucleoside triphosphate hydrolases"/>
    <property type="match status" value="1"/>
</dbReference>
<dbReference type="SUPFAM" id="SSF54752">
    <property type="entry name" value="RecA protein, C-terminal domain"/>
    <property type="match status" value="1"/>
</dbReference>
<dbReference type="PROSITE" id="PS00321">
    <property type="entry name" value="RECA_1"/>
    <property type="match status" value="1"/>
</dbReference>
<dbReference type="PROSITE" id="PS50162">
    <property type="entry name" value="RECA_2"/>
    <property type="match status" value="1"/>
</dbReference>
<dbReference type="PROSITE" id="PS50163">
    <property type="entry name" value="RECA_3"/>
    <property type="match status" value="1"/>
</dbReference>
<reference key="1">
    <citation type="journal article" date="2004" name="PLoS Biol.">
        <title>Genomic insights into methanotrophy: the complete genome sequence of Methylococcus capsulatus (Bath).</title>
        <authorList>
            <person name="Ward N.L."/>
            <person name="Larsen O."/>
            <person name="Sakwa J."/>
            <person name="Bruseth L."/>
            <person name="Khouri H.M."/>
            <person name="Durkin A.S."/>
            <person name="Dimitrov G."/>
            <person name="Jiang L."/>
            <person name="Scanlan D."/>
            <person name="Kang K.H."/>
            <person name="Lewis M.R."/>
            <person name="Nelson K.E."/>
            <person name="Methe B.A."/>
            <person name="Wu M."/>
            <person name="Heidelberg J.F."/>
            <person name="Paulsen I.T."/>
            <person name="Fouts D.E."/>
            <person name="Ravel J."/>
            <person name="Tettelin H."/>
            <person name="Ren Q."/>
            <person name="Read T.D."/>
            <person name="DeBoy R.T."/>
            <person name="Seshadri R."/>
            <person name="Salzberg S.L."/>
            <person name="Jensen H.B."/>
            <person name="Birkeland N.K."/>
            <person name="Nelson W.C."/>
            <person name="Dodson R.J."/>
            <person name="Grindhaug S.H."/>
            <person name="Holt I.E."/>
            <person name="Eidhammer I."/>
            <person name="Jonasen I."/>
            <person name="Vanaken S."/>
            <person name="Utterback T.R."/>
            <person name="Feldblyum T.V."/>
            <person name="Fraser C.M."/>
            <person name="Lillehaug J.R."/>
            <person name="Eisen J.A."/>
        </authorList>
    </citation>
    <scope>NUCLEOTIDE SEQUENCE [LARGE SCALE GENOMIC DNA]</scope>
    <source>
        <strain>ATCC 33009 / NCIMB 11132 / Bath</strain>
    </source>
</reference>
<keyword id="KW-0067">ATP-binding</keyword>
<keyword id="KW-0963">Cytoplasm</keyword>
<keyword id="KW-0227">DNA damage</keyword>
<keyword id="KW-0233">DNA recombination</keyword>
<keyword id="KW-0234">DNA repair</keyword>
<keyword id="KW-0238">DNA-binding</keyword>
<keyword id="KW-0547">Nucleotide-binding</keyword>
<keyword id="KW-1185">Reference proteome</keyword>
<keyword id="KW-0742">SOS response</keyword>
<organism>
    <name type="scientific">Methylococcus capsulatus (strain ATCC 33009 / NCIMB 11132 / Bath)</name>
    <dbReference type="NCBI Taxonomy" id="243233"/>
    <lineage>
        <taxon>Bacteria</taxon>
        <taxon>Pseudomonadati</taxon>
        <taxon>Pseudomonadota</taxon>
        <taxon>Gammaproteobacteria</taxon>
        <taxon>Methylococcales</taxon>
        <taxon>Methylococcaceae</taxon>
        <taxon>Methylococcus</taxon>
    </lineage>
</organism>
<protein>
    <recommendedName>
        <fullName evidence="1">Protein RecA</fullName>
    </recommendedName>
    <alternativeName>
        <fullName evidence="1">Recombinase A</fullName>
    </alternativeName>
</protein>
<sequence>MDENKRKALGAALSQIEKQFGKGSVMRMGDVAAVRDIDVIPTGSLALDIALGCGGLPRGRIVEIYGPESSGKTTLTLEVIAQAQKTGGVAAFVDAEHALDPVYAEKIGVNLDDLLVSQPDTGEQALEIADVLVRSGGVDVVVIDSVAALTPKAELEGEMGDSHMGLQARLMSQALRKLTANIKRSNTLVIFINQIRMKIGVMFGNPETTTGGNALKFYASVRLDIRRSGAIKNGDEVIGNETRVKVVKNKVAPPFRTADFEILYGEGISREGELIDLGVNHDIVQKSGSWYSYGGDRIGQGKDNVRIYLKEHPEVAAAIEAAVREKALAGFQHAPSAERAALEESGF</sequence>
<evidence type="ECO:0000255" key="1">
    <source>
        <dbReference type="HAMAP-Rule" id="MF_00268"/>
    </source>
</evidence>
<feature type="chain" id="PRO_0000122756" description="Protein RecA">
    <location>
        <begin position="1"/>
        <end position="347"/>
    </location>
</feature>
<feature type="binding site" evidence="1">
    <location>
        <begin position="66"/>
        <end position="73"/>
    </location>
    <ligand>
        <name>ATP</name>
        <dbReference type="ChEBI" id="CHEBI:30616"/>
    </ligand>
</feature>
<proteinExistence type="inferred from homology"/>
<gene>
    <name evidence="1" type="primary">recA</name>
    <name type="ordered locus">MCA0387</name>
</gene>
<name>RECA_METCA</name>